<dbReference type="EC" id="3.4.24.49"/>
<dbReference type="EMBL" id="AF056025">
    <property type="protein sequence ID" value="AAC61986.2"/>
    <property type="molecule type" value="mRNA"/>
</dbReference>
<dbReference type="PDB" id="3DSL">
    <property type="method" value="X-ray"/>
    <property type="resolution" value="2.70 A"/>
    <property type="chains" value="A/B=192-610"/>
</dbReference>
<dbReference type="PDBsum" id="3DSL"/>
<dbReference type="SMR" id="O93523"/>
<dbReference type="MEROPS" id="M12.140"/>
<dbReference type="iPTMnet" id="O93523"/>
<dbReference type="KEGG" id="ag:AAC61986"/>
<dbReference type="BRENDA" id="3.4.24.49">
    <property type="organism ID" value="911"/>
</dbReference>
<dbReference type="EvolutionaryTrace" id="O93523"/>
<dbReference type="GO" id="GO:0005576">
    <property type="term" value="C:extracellular region"/>
    <property type="evidence" value="ECO:0007669"/>
    <property type="project" value="UniProtKB-SubCell"/>
</dbReference>
<dbReference type="GO" id="GO:0005886">
    <property type="term" value="C:plasma membrane"/>
    <property type="evidence" value="ECO:0007669"/>
    <property type="project" value="TreeGrafter"/>
</dbReference>
<dbReference type="GO" id="GO:0046872">
    <property type="term" value="F:metal ion binding"/>
    <property type="evidence" value="ECO:0007669"/>
    <property type="project" value="UniProtKB-KW"/>
</dbReference>
<dbReference type="GO" id="GO:0004222">
    <property type="term" value="F:metalloendopeptidase activity"/>
    <property type="evidence" value="ECO:0007669"/>
    <property type="project" value="InterPro"/>
</dbReference>
<dbReference type="GO" id="GO:0090729">
    <property type="term" value="F:toxin activity"/>
    <property type="evidence" value="ECO:0007669"/>
    <property type="project" value="UniProtKB-KW"/>
</dbReference>
<dbReference type="GO" id="GO:0006508">
    <property type="term" value="P:proteolysis"/>
    <property type="evidence" value="ECO:0007669"/>
    <property type="project" value="UniProtKB-KW"/>
</dbReference>
<dbReference type="CDD" id="cd04269">
    <property type="entry name" value="ZnMc_adamalysin_II_like"/>
    <property type="match status" value="1"/>
</dbReference>
<dbReference type="FunFam" id="3.40.390.10:FF:000002">
    <property type="entry name" value="Disintegrin and metalloproteinase domain-containing protein 22"/>
    <property type="match status" value="1"/>
</dbReference>
<dbReference type="FunFam" id="4.10.70.10:FF:000001">
    <property type="entry name" value="Disintegrin and metalloproteinase domain-containing protein 22"/>
    <property type="match status" value="1"/>
</dbReference>
<dbReference type="Gene3D" id="3.40.390.10">
    <property type="entry name" value="Collagenase (Catalytic Domain)"/>
    <property type="match status" value="1"/>
</dbReference>
<dbReference type="Gene3D" id="4.10.70.10">
    <property type="entry name" value="Disintegrin domain"/>
    <property type="match status" value="1"/>
</dbReference>
<dbReference type="InterPro" id="IPR006586">
    <property type="entry name" value="ADAM_Cys-rich"/>
</dbReference>
<dbReference type="InterPro" id="IPR018358">
    <property type="entry name" value="Disintegrin_CS"/>
</dbReference>
<dbReference type="InterPro" id="IPR001762">
    <property type="entry name" value="Disintegrin_dom"/>
</dbReference>
<dbReference type="InterPro" id="IPR036436">
    <property type="entry name" value="Disintegrin_dom_sf"/>
</dbReference>
<dbReference type="InterPro" id="IPR024079">
    <property type="entry name" value="MetalloPept_cat_dom_sf"/>
</dbReference>
<dbReference type="InterPro" id="IPR001590">
    <property type="entry name" value="Peptidase_M12B"/>
</dbReference>
<dbReference type="InterPro" id="IPR002870">
    <property type="entry name" value="Peptidase_M12B_N"/>
</dbReference>
<dbReference type="InterPro" id="IPR034027">
    <property type="entry name" value="Reprolysin_adamalysin"/>
</dbReference>
<dbReference type="PANTHER" id="PTHR11905">
    <property type="entry name" value="ADAM A DISINTEGRIN AND METALLOPROTEASE DOMAIN"/>
    <property type="match status" value="1"/>
</dbReference>
<dbReference type="PANTHER" id="PTHR11905:SF32">
    <property type="entry name" value="DISINTEGRIN AND METALLOPROTEINASE DOMAIN-CONTAINING PROTEIN 28"/>
    <property type="match status" value="1"/>
</dbReference>
<dbReference type="Pfam" id="PF08516">
    <property type="entry name" value="ADAM_CR"/>
    <property type="match status" value="1"/>
</dbReference>
<dbReference type="Pfam" id="PF00200">
    <property type="entry name" value="Disintegrin"/>
    <property type="match status" value="1"/>
</dbReference>
<dbReference type="Pfam" id="PF01562">
    <property type="entry name" value="Pep_M12B_propep"/>
    <property type="match status" value="1"/>
</dbReference>
<dbReference type="Pfam" id="PF01421">
    <property type="entry name" value="Reprolysin"/>
    <property type="match status" value="1"/>
</dbReference>
<dbReference type="PRINTS" id="PR00289">
    <property type="entry name" value="DISINTEGRIN"/>
</dbReference>
<dbReference type="SMART" id="SM00608">
    <property type="entry name" value="ACR"/>
    <property type="match status" value="1"/>
</dbReference>
<dbReference type="SMART" id="SM00050">
    <property type="entry name" value="DISIN"/>
    <property type="match status" value="1"/>
</dbReference>
<dbReference type="SUPFAM" id="SSF57552">
    <property type="entry name" value="Blood coagulation inhibitor (disintegrin)"/>
    <property type="match status" value="1"/>
</dbReference>
<dbReference type="SUPFAM" id="SSF55486">
    <property type="entry name" value="Metalloproteases ('zincins'), catalytic domain"/>
    <property type="match status" value="1"/>
</dbReference>
<dbReference type="PROSITE" id="PS50215">
    <property type="entry name" value="ADAM_MEPRO"/>
    <property type="match status" value="1"/>
</dbReference>
<dbReference type="PROSITE" id="PS00427">
    <property type="entry name" value="DISINTEGRIN_1"/>
    <property type="match status" value="1"/>
</dbReference>
<dbReference type="PROSITE" id="PS50214">
    <property type="entry name" value="DISINTEGRIN_2"/>
    <property type="match status" value="1"/>
</dbReference>
<dbReference type="PROSITE" id="PS00142">
    <property type="entry name" value="ZINC_PROTEASE"/>
    <property type="match status" value="1"/>
</dbReference>
<feature type="signal peptide" evidence="2">
    <location>
        <begin position="1"/>
        <end position="20"/>
    </location>
</feature>
<feature type="propeptide" id="PRO_0000326418" evidence="1">
    <location>
        <begin position="21"/>
        <end position="191"/>
    </location>
</feature>
<feature type="chain" id="PRO_0000326419" description="Zinc metalloproteinase-disintegrin-like bothropasin" evidence="6">
    <location>
        <begin position="192"/>
        <end position="610"/>
    </location>
</feature>
<feature type="chain" id="PRO_0000326420" description="Disintegrin-like bothropasin" evidence="1">
    <location>
        <begin position="399"/>
        <end position="610"/>
    </location>
</feature>
<feature type="domain" description="Peptidase M12B" evidence="4">
    <location>
        <begin position="198"/>
        <end position="394"/>
    </location>
</feature>
<feature type="domain" description="Disintegrin" evidence="3">
    <location>
        <begin position="402"/>
        <end position="488"/>
    </location>
</feature>
<feature type="short sequence motif" description="D/ECD-tripeptide">
    <location>
        <begin position="466"/>
        <end position="468"/>
    </location>
</feature>
<feature type="active site" evidence="4 5">
    <location>
        <position position="335"/>
    </location>
</feature>
<feature type="binding site" evidence="6 10">
    <location>
        <position position="201"/>
    </location>
    <ligand>
        <name>Ca(2+)</name>
        <dbReference type="ChEBI" id="CHEBI:29108"/>
        <label>1</label>
    </ligand>
</feature>
<feature type="binding site" evidence="6 10">
    <location>
        <position position="285"/>
    </location>
    <ligand>
        <name>Ca(2+)</name>
        <dbReference type="ChEBI" id="CHEBI:29108"/>
        <label>1</label>
    </ligand>
</feature>
<feature type="binding site" evidence="6 10">
    <location>
        <position position="334"/>
    </location>
    <ligand>
        <name>Zn(2+)</name>
        <dbReference type="ChEBI" id="CHEBI:29105"/>
        <note>catalytic</note>
    </ligand>
</feature>
<feature type="binding site" evidence="6 10">
    <location>
        <position position="338"/>
    </location>
    <ligand>
        <name>Zn(2+)</name>
        <dbReference type="ChEBI" id="CHEBI:29105"/>
        <note>catalytic</note>
    </ligand>
</feature>
<feature type="binding site" evidence="6 10">
    <location>
        <position position="344"/>
    </location>
    <ligand>
        <name>Zn(2+)</name>
        <dbReference type="ChEBI" id="CHEBI:29105"/>
        <note>catalytic</note>
    </ligand>
</feature>
<feature type="binding site" evidence="6 10">
    <location>
        <position position="389"/>
    </location>
    <ligand>
        <name>Ca(2+)</name>
        <dbReference type="ChEBI" id="CHEBI:29108"/>
        <label>1</label>
    </ligand>
</feature>
<feature type="binding site" evidence="6 10">
    <location>
        <position position="392"/>
    </location>
    <ligand>
        <name>Ca(2+)</name>
        <dbReference type="ChEBI" id="CHEBI:29108"/>
        <label>1</label>
    </ligand>
</feature>
<feature type="binding site" evidence="6 10">
    <location>
        <position position="404"/>
    </location>
    <ligand>
        <name>Ca(2+)</name>
        <dbReference type="ChEBI" id="CHEBI:29108"/>
        <label>2</label>
    </ligand>
</feature>
<feature type="binding site" evidence="6 10">
    <location>
        <position position="407"/>
    </location>
    <ligand>
        <name>Ca(2+)</name>
        <dbReference type="ChEBI" id="CHEBI:29108"/>
        <label>2</label>
    </ligand>
</feature>
<feature type="binding site" evidence="6 10">
    <location>
        <position position="409"/>
    </location>
    <ligand>
        <name>Ca(2+)</name>
        <dbReference type="ChEBI" id="CHEBI:29108"/>
        <label>2</label>
    </ligand>
</feature>
<feature type="binding site" evidence="6 10">
    <location>
        <position position="411"/>
    </location>
    <ligand>
        <name>Ca(2+)</name>
        <dbReference type="ChEBI" id="CHEBI:29108"/>
        <label>2</label>
    </ligand>
</feature>
<feature type="binding site" evidence="6 10">
    <location>
        <position position="414"/>
    </location>
    <ligand>
        <name>Ca(2+)</name>
        <dbReference type="ChEBI" id="CHEBI:29108"/>
        <label>2</label>
    </ligand>
</feature>
<feature type="binding site" evidence="6 10">
    <location>
        <position position="417"/>
    </location>
    <ligand>
        <name>Ca(2+)</name>
        <dbReference type="ChEBI" id="CHEBI:29108"/>
        <label>2</label>
    </ligand>
</feature>
<feature type="binding site" evidence="6 10">
    <location>
        <position position="468"/>
    </location>
    <ligand>
        <name>Ca(2+)</name>
        <dbReference type="ChEBI" id="CHEBI:29108"/>
        <label>3</label>
    </ligand>
</feature>
<feature type="binding site" evidence="6 10">
    <location>
        <position position="469"/>
    </location>
    <ligand>
        <name>Ca(2+)</name>
        <dbReference type="ChEBI" id="CHEBI:29108"/>
        <label>3</label>
    </ligand>
</feature>
<feature type="binding site" evidence="6 10">
    <location>
        <position position="471"/>
    </location>
    <ligand>
        <name>Ca(2+)</name>
        <dbReference type="ChEBI" id="CHEBI:29108"/>
        <label>3</label>
    </ligand>
</feature>
<feature type="binding site" evidence="6 10">
    <location>
        <position position="483"/>
    </location>
    <ligand>
        <name>Ca(2+)</name>
        <dbReference type="ChEBI" id="CHEBI:29108"/>
        <label>3</label>
    </ligand>
</feature>
<feature type="binding site" evidence="6 10">
    <location>
        <position position="484"/>
    </location>
    <ligand>
        <name>Ca(2+)</name>
        <dbReference type="ChEBI" id="CHEBI:29108"/>
        <label>3</label>
    </ligand>
</feature>
<feature type="site" description="Necessary, but not sufficient, for proteolytic processing" evidence="1">
    <location>
        <position position="378"/>
    </location>
</feature>
<feature type="modified residue" description="Pyrrolidone carboxylic acid" evidence="6">
    <location>
        <position position="192"/>
    </location>
</feature>
<feature type="glycosylation site" description="N-linked (GlcNAc...) asparagine" evidence="6">
    <location>
        <position position="372"/>
    </location>
</feature>
<feature type="disulfide bond" description="In zinc metalloproteinase-disintegrin-like bothropasin" evidence="6 10">
    <location>
        <begin position="309"/>
        <end position="389"/>
    </location>
</feature>
<feature type="disulfide bond" description="In zinc metalloproteinase-disintegrin-like bothropasin" evidence="6 10">
    <location>
        <begin position="349"/>
        <end position="373"/>
    </location>
</feature>
<feature type="disulfide bond" description="In zinc metalloproteinase-disintegrin-like bothropasin" evidence="6 10">
    <location>
        <begin position="351"/>
        <end position="356"/>
    </location>
</feature>
<feature type="disulfide bond" description="In zinc metalloproteinase-disintegrin-like bothropasin; alternate" evidence="6 10">
    <location>
        <begin position="405"/>
        <end position="434"/>
    </location>
</feature>
<feature type="disulfide bond" description="In disintegrin-like bothropasin; alternate" evidence="1">
    <location>
        <begin position="405"/>
        <end position="424"/>
    </location>
</feature>
<feature type="disulfide bond" description="In disintegrin-like bothropasin; alternate" evidence="1">
    <location>
        <begin position="416"/>
        <end position="434"/>
    </location>
</feature>
<feature type="disulfide bond" description="In zinc metalloproteinase-disintegrin-like bothropasin; alternate" evidence="6 10">
    <location>
        <begin position="416"/>
        <end position="429"/>
    </location>
</feature>
<feature type="disulfide bond" description="In zinc metalloproteinase-disintegrin-like bothropasin; alternate" evidence="6 10">
    <location>
        <begin position="418"/>
        <end position="424"/>
    </location>
</feature>
<feature type="disulfide bond" description="In zinc metalloproteinase-disintegrin-like bothropasin" evidence="6 10">
    <location>
        <begin position="428"/>
        <end position="451"/>
    </location>
</feature>
<feature type="disulfide bond" description="In zinc metalloproteinase-disintegrin-like bothropasin" evidence="6 10">
    <location>
        <begin position="442"/>
        <end position="448"/>
    </location>
</feature>
<feature type="disulfide bond" description="In zinc metalloproteinase-disintegrin-like bothropasin" evidence="6 10">
    <location>
        <begin position="447"/>
        <end position="473"/>
    </location>
</feature>
<feature type="disulfide bond" description="In both disintegrin-like bothropasin and zinc metalloproteinase-disintegrin-like bothropasin" evidence="3 4 6 10">
    <location>
        <begin position="460"/>
        <end position="480"/>
    </location>
</feature>
<feature type="disulfide bond" description="In zinc metalloproteinase-disintegrin-like bothropasin; alternate" evidence="6 10">
    <location>
        <begin position="467"/>
        <end position="499"/>
    </location>
</feature>
<feature type="disulfide bond" description="In disintegrin-like bothropasin; alternate" evidence="1">
    <location>
        <begin position="467"/>
        <end position="492"/>
    </location>
</feature>
<feature type="disulfide bond" description="In zinc metalloproteinase-disintegrin-like bothropasin; alternate" evidence="6 10">
    <location>
        <begin position="492"/>
        <end position="504"/>
    </location>
</feature>
<feature type="disulfide bond" description="In disintegrin-like bothropasin" evidence="1">
    <location>
        <begin position="499"/>
        <end position="504"/>
    </location>
</feature>
<feature type="disulfide bond" description="In zinc metalloproteinase-disintegrin-like bothropasin; alternate" evidence="6 10">
    <location>
        <begin position="511"/>
        <end position="561"/>
    </location>
</feature>
<feature type="disulfide bond" description="In disintegrin-like bothropasin; alternate" evidence="1">
    <location>
        <begin position="511"/>
        <end position="526"/>
    </location>
</feature>
<feature type="disulfide bond" description="In zinc metalloproteinase-disintegrin-like bothropasin; alternate" evidence="6 10">
    <location>
        <begin position="526"/>
        <end position="572"/>
    </location>
</feature>
<feature type="disulfide bond" description="In zinc metalloproteinase-disintegrin-like bothropasin; alternate" evidence="6 10">
    <location>
        <begin position="539"/>
        <end position="549"/>
    </location>
</feature>
<feature type="disulfide bond" description="In disintegrin-like bothropasin; alternate" evidence="1">
    <location>
        <begin position="549"/>
        <end position="556"/>
    </location>
</feature>
<feature type="disulfide bond" description="In zinc metalloproteinase-disintegrin-like bothropasin; alternate" evidence="6 10">
    <location>
        <begin position="556"/>
        <end position="598"/>
    </location>
</feature>
<feature type="disulfide bond" description="In disintegrin-like bothropasin" evidence="1">
    <location>
        <begin position="561"/>
        <end position="572"/>
    </location>
</feature>
<feature type="disulfide bond" description="In zinc metalloproteinase-disintegrin-like bothropasin; alternate" evidence="6 10">
    <location>
        <begin position="592"/>
        <end position="603"/>
    </location>
</feature>
<feature type="disulfide bond" description="In disintegrin-like bothropasin" evidence="1">
    <location>
        <begin position="598"/>
        <end position="603"/>
    </location>
</feature>
<accession>O93523</accession>
<reference key="1">
    <citation type="journal article" date="2003" name="Toxicon">
        <title>Molecular cloning and expression of structural domains of bothropasin, a P-III metalloproteinase from the venom of Bothrops jararaca.</title>
        <authorList>
            <person name="Assakura M.T."/>
            <person name="Silva C.A."/>
            <person name="Mentele R."/>
            <person name="Camargo A.C.M."/>
            <person name="Serrano S.M.T."/>
        </authorList>
    </citation>
    <scope>NUCLEOTIDE SEQUENCE [MRNA]</scope>
    <scope>PROTEIN SEQUENCE OF 248-253; 257-268; 273-276; 296-303 AND 395-420</scope>
    <scope>FUNCTION</scope>
    <source>
        <tissue>Venom</tissue>
        <tissue>Venom gland</tissue>
    </source>
</reference>
<reference key="2">
    <citation type="journal article" date="1982" name="Toxicon">
        <title>Isolation and characterization of a proteolytic enzyme from the venom of the snake Bothrops jararaca (Jararaca).</title>
        <authorList>
            <person name="Mandelbaum F.R."/>
            <person name="Reichel A.P."/>
            <person name="Assakura M.T."/>
        </authorList>
    </citation>
    <scope>FUNCTION</scope>
    <scope>CATALYTIC ACTIVITY</scope>
    <scope>ACTIVITY REGULATION</scope>
    <scope>SUBUNIT</scope>
    <source>
        <tissue>Venom</tissue>
    </source>
</reference>
<reference key="3">
    <citation type="journal article" date="2008" name="Toxicon">
        <title>The three-dimensional structure of bothropasin, the main hemorrhagic factor from Bothrops jararaca venom: insights for a new classification of snake venom metalloprotease subgroups.</title>
        <authorList>
            <person name="Muniz J.R.C."/>
            <person name="Ambrosio A.L.B."/>
            <person name="Selistre-de-Araujo H.S."/>
            <person name="Cominetti M.R."/>
            <person name="Moura-da-Silva A.M."/>
            <person name="Oliva G."/>
            <person name="Garratt R.C."/>
            <person name="Souza D.H.F."/>
        </authorList>
    </citation>
    <scope>X-RAY CRYSTALLOGRAPHY (2.7 ANGSTROMS) OF 192-610 IN COMPLEX WITH ZINC AND CALCIUM IONS</scope>
    <scope>COFACTOR</scope>
    <scope>METAL-BINDING SITES</scope>
    <scope>GLYCOSYLATION AT ASN-372</scope>
    <scope>PYROGLUTAMATE FORMATION AT GLN-192</scope>
    <scope>DISULFIDE BONDS</scope>
    <source>
        <tissue>Venom</tissue>
    </source>
</reference>
<evidence type="ECO:0000250" key="1"/>
<evidence type="ECO:0000255" key="2"/>
<evidence type="ECO:0000255" key="3">
    <source>
        <dbReference type="PROSITE-ProRule" id="PRU00068"/>
    </source>
</evidence>
<evidence type="ECO:0000255" key="4">
    <source>
        <dbReference type="PROSITE-ProRule" id="PRU00276"/>
    </source>
</evidence>
<evidence type="ECO:0000255" key="5">
    <source>
        <dbReference type="PROSITE-ProRule" id="PRU10095"/>
    </source>
</evidence>
<evidence type="ECO:0000269" key="6">
    <source>
    </source>
</evidence>
<evidence type="ECO:0000269" key="7">
    <source>
    </source>
</evidence>
<evidence type="ECO:0000303" key="8">
    <source>
    </source>
</evidence>
<evidence type="ECO:0000305" key="9"/>
<evidence type="ECO:0000312" key="10">
    <source>
        <dbReference type="PDB" id="3DSL"/>
    </source>
</evidence>
<proteinExistence type="evidence at protein level"/>
<sequence length="610" mass="68213">MIEVLLVTICLAAFPYQGSSIILESGNVNDYEVVYPRKVTALPKGAVQPKYEDAMQYEFKVNGEPVVLHLEKNKGLFSKDYSETHYSPDGREITTYPAVEDHCYYHGRIENDADSTASISACNGLKGHFKLQRETYFIEPLKLSNSEAHAVFKYENVEKEDEAPKMCGVTQNWKSYEPIKKASQLVVTAEQQKYNPFRYVELFIVVDQGMVTKNNGDLDKIKARMYELANIVNEILRYLYMHAALVGLEIWSNGDKITVKPDVDYTLNSFAEWRKTDLLTRKKHDNAQLLTAIDFNGPTIGYAYIGSMCHPKRSVAIVEDYSPINLVVAVIMAHEMGHNLGIHHDTDFCSCGDYPCIMGPTISNEPSKFFSNCSYIQCWDFIMKENPQCILNEPLGTDIVSPPVCGNELLEVGEECDCGTPENCQNECCDAATCKLKSGSQCGHGDCCEQCKFSKSGTECRASMSECDPAEHCTGQSSECPADVFHKNGQPCLDNYGYCYNGNCPIMYHQCYALFGADVYEAEDSCFKDNQKGNYYGYCRKENGKKIPCAPEDVKCGRLYCKDNSPGQNNPCKMFYSNDDEHKGMVLPGTKCADGKVCSNGHCVDVATAY</sequence>
<keyword id="KW-0002">3D-structure</keyword>
<keyword id="KW-0106">Calcium</keyword>
<keyword id="KW-1217">Cell adhesion impairing toxin</keyword>
<keyword id="KW-0903">Direct protein sequencing</keyword>
<keyword id="KW-1015">Disulfide bond</keyword>
<keyword id="KW-0325">Glycoprotein</keyword>
<keyword id="KW-1200">Hemorrhagic toxin</keyword>
<keyword id="KW-1199">Hemostasis impairing toxin</keyword>
<keyword id="KW-0378">Hydrolase</keyword>
<keyword id="KW-0479">Metal-binding</keyword>
<keyword id="KW-0482">Metalloprotease</keyword>
<keyword id="KW-1201">Platelet aggregation inhibiting toxin</keyword>
<keyword id="KW-0645">Protease</keyword>
<keyword id="KW-0873">Pyrrolidone carboxylic acid</keyword>
<keyword id="KW-0964">Secreted</keyword>
<keyword id="KW-0732">Signal</keyword>
<keyword id="KW-0800">Toxin</keyword>
<keyword id="KW-0862">Zinc</keyword>
<keyword id="KW-0865">Zymogen</keyword>
<protein>
    <recommendedName>
        <fullName evidence="8">Zinc metalloproteinase-disintegrin-like bothropasin</fullName>
        <ecNumber>3.4.24.49</ecNumber>
    </recommendedName>
    <alternativeName>
        <fullName>Snake venom metalloproteinase</fullName>
        <shortName>SVMP</shortName>
    </alternativeName>
    <component>
        <recommendedName>
            <fullName>Disintegrin-like bothropasin</fullName>
        </recommendedName>
    </component>
</protein>
<organism>
    <name type="scientific">Bothrops jararaca</name>
    <name type="common">Jararaca</name>
    <name type="synonym">Bothrops jajaraca</name>
    <dbReference type="NCBI Taxonomy" id="8724"/>
    <lineage>
        <taxon>Eukaryota</taxon>
        <taxon>Metazoa</taxon>
        <taxon>Chordata</taxon>
        <taxon>Craniata</taxon>
        <taxon>Vertebrata</taxon>
        <taxon>Euteleostomi</taxon>
        <taxon>Lepidosauria</taxon>
        <taxon>Squamata</taxon>
        <taxon>Bifurcata</taxon>
        <taxon>Unidentata</taxon>
        <taxon>Episquamata</taxon>
        <taxon>Toxicofera</taxon>
        <taxon>Serpentes</taxon>
        <taxon>Colubroidea</taxon>
        <taxon>Viperidae</taxon>
        <taxon>Crotalinae</taxon>
        <taxon>Bothrops</taxon>
    </lineage>
</organism>
<comment type="function">
    <molecule>Zinc metalloproteinase-disintegrin-like bothropasin</molecule>
    <text>Has caseinolytic activity. Causes hemorrhage on rabbit skin and causes myonecrosis in mouse tibialis anterior muscle.</text>
</comment>
<comment type="function">
    <molecule>Disintegrin-like bothropasin</molecule>
    <text>Inhibits platelet aggregation.</text>
</comment>
<comment type="catalytic activity">
    <reaction evidence="7">
        <text>Cleavage of 5-His-|-Leu-6, 10-His-|-Leu-11, 14-Ala-|-Leu-15, 16-Tyr-|-Leu-17 and 24-Phe-|-Phe-25 in insulin B chain.</text>
        <dbReference type="EC" id="3.4.24.49"/>
    </reaction>
</comment>
<comment type="cofactor">
    <cofactor evidence="6">
        <name>Zn(2+)</name>
        <dbReference type="ChEBI" id="CHEBI:29105"/>
    </cofactor>
    <text evidence="6">Binds 1 zinc ion per subunit.</text>
</comment>
<comment type="activity regulation">
    <text evidence="7">Inhibited by EDTA and EGTA.</text>
</comment>
<comment type="subunit">
    <text evidence="6 7">Monomer.</text>
</comment>
<comment type="subcellular location">
    <subcellularLocation>
        <location>Secreted</location>
    </subcellularLocation>
</comment>
<comment type="tissue specificity">
    <text>Expressed by the venom gland.</text>
</comment>
<comment type="miscellaneous">
    <text>The metalloproteinase domain which is released from the cleavage of the disintegrin bothropasin may be unstable.</text>
</comment>
<comment type="similarity">
    <text evidence="9">Belongs to the venom metalloproteinase (M12B) family. P-III subfamily. P-IIIb sub-subfamily.</text>
</comment>
<name>VM3BP_BOTJA</name>